<protein>
    <recommendedName>
        <fullName evidence="1">tRNA/tmRNA (uracil-C(5))-methyltransferase</fullName>
        <ecNumber evidence="1">2.1.1.-</ecNumber>
        <ecNumber evidence="1">2.1.1.35</ecNumber>
    </recommendedName>
    <alternativeName>
        <fullName evidence="1">tRNA (uracil(54)-C(5))-methyltransferase</fullName>
    </alternativeName>
    <alternativeName>
        <fullName evidence="1">tRNA(m5U54)-methyltransferase</fullName>
        <shortName evidence="1">RUMT</shortName>
    </alternativeName>
    <alternativeName>
        <fullName evidence="1">tmRNA (uracil(341)-C(5))-methyltransferase</fullName>
    </alternativeName>
</protein>
<name>TRMA_PSEF5</name>
<evidence type="ECO:0000255" key="1">
    <source>
        <dbReference type="HAMAP-Rule" id="MF_01011"/>
    </source>
</evidence>
<gene>
    <name evidence="1" type="primary">trmA</name>
    <name type="ordered locus">PFL_5373</name>
</gene>
<sequence length="359" mass="40829">MTFDAASYTTQLNDKVARLRDLLAPFDAPEPQVFDSPLQNFRLRAEFRLWREAGERHYAMFSQDDKRTPILIEEFPIASQRINQLMPRLKAAWQASAPLSHKLFQVEFLTTLAGDAMITLCYHRPLDEHWHKAASQLAADLKVSVIGRSKGKREVIGQDYVVEKLEVGGRTFSYRQPEGAFTQPNGTVNQKMLNWAYEALGERQDDLLELYCGNGNFTLPLATRVRKVLATEISKTSVNAALSNLSENAVDNVTLVRLSAEELTEALNEVRPFRRLQGVDLKSYEFGSVFVDPPRAGMDPDTCELTRRFDNILYISCNPETLAANIAQLHDTHRITRCALFDQFPWTHHMESGVLLTRR</sequence>
<proteinExistence type="inferred from homology"/>
<reference key="1">
    <citation type="journal article" date="2005" name="Nat. Biotechnol.">
        <title>Complete genome sequence of the plant commensal Pseudomonas fluorescens Pf-5.</title>
        <authorList>
            <person name="Paulsen I.T."/>
            <person name="Press C.M."/>
            <person name="Ravel J."/>
            <person name="Kobayashi D.Y."/>
            <person name="Myers G.S.A."/>
            <person name="Mavrodi D.V."/>
            <person name="DeBoy R.T."/>
            <person name="Seshadri R."/>
            <person name="Ren Q."/>
            <person name="Madupu R."/>
            <person name="Dodson R.J."/>
            <person name="Durkin A.S."/>
            <person name="Brinkac L.M."/>
            <person name="Daugherty S.C."/>
            <person name="Sullivan S.A."/>
            <person name="Rosovitz M.J."/>
            <person name="Gwinn M.L."/>
            <person name="Zhou L."/>
            <person name="Schneider D.J."/>
            <person name="Cartinhour S.W."/>
            <person name="Nelson W.C."/>
            <person name="Weidman J."/>
            <person name="Watkins K."/>
            <person name="Tran K."/>
            <person name="Khouri H."/>
            <person name="Pierson E.A."/>
            <person name="Pierson L.S. III"/>
            <person name="Thomashow L.S."/>
            <person name="Loper J.E."/>
        </authorList>
    </citation>
    <scope>NUCLEOTIDE SEQUENCE [LARGE SCALE GENOMIC DNA]</scope>
    <source>
        <strain>ATCC BAA-477 / NRRL B-23932 / Pf-5</strain>
    </source>
</reference>
<keyword id="KW-0489">Methyltransferase</keyword>
<keyword id="KW-0949">S-adenosyl-L-methionine</keyword>
<keyword id="KW-0808">Transferase</keyword>
<keyword id="KW-0819">tRNA processing</keyword>
<feature type="chain" id="PRO_0000281452" description="tRNA/tmRNA (uracil-C(5))-methyltransferase">
    <location>
        <begin position="1"/>
        <end position="359"/>
    </location>
</feature>
<feature type="active site" description="Nucleophile" evidence="1">
    <location>
        <position position="317"/>
    </location>
</feature>
<feature type="active site" description="Proton acceptor" evidence="1">
    <location>
        <position position="351"/>
    </location>
</feature>
<feature type="binding site" evidence="1">
    <location>
        <position position="183"/>
    </location>
    <ligand>
        <name>S-adenosyl-L-methionine</name>
        <dbReference type="ChEBI" id="CHEBI:59789"/>
    </ligand>
</feature>
<feature type="binding site" evidence="1">
    <location>
        <position position="211"/>
    </location>
    <ligand>
        <name>S-adenosyl-L-methionine</name>
        <dbReference type="ChEBI" id="CHEBI:59789"/>
    </ligand>
</feature>
<feature type="binding site" evidence="1">
    <location>
        <position position="216"/>
    </location>
    <ligand>
        <name>S-adenosyl-L-methionine</name>
        <dbReference type="ChEBI" id="CHEBI:59789"/>
    </ligand>
</feature>
<feature type="binding site" evidence="1">
    <location>
        <position position="232"/>
    </location>
    <ligand>
        <name>S-adenosyl-L-methionine</name>
        <dbReference type="ChEBI" id="CHEBI:59789"/>
    </ligand>
</feature>
<feature type="binding site" evidence="1">
    <location>
        <position position="292"/>
    </location>
    <ligand>
        <name>S-adenosyl-L-methionine</name>
        <dbReference type="ChEBI" id="CHEBI:59789"/>
    </ligand>
</feature>
<dbReference type="EC" id="2.1.1.-" evidence="1"/>
<dbReference type="EC" id="2.1.1.35" evidence="1"/>
<dbReference type="EMBL" id="CP000076">
    <property type="protein sequence ID" value="AAY94583.1"/>
    <property type="molecule type" value="Genomic_DNA"/>
</dbReference>
<dbReference type="RefSeq" id="WP_011063596.1">
    <property type="nucleotide sequence ID" value="NC_004129.6"/>
</dbReference>
<dbReference type="SMR" id="Q4K5P2"/>
<dbReference type="STRING" id="220664.PFL_5373"/>
<dbReference type="KEGG" id="pfl:PFL_5373"/>
<dbReference type="PATRIC" id="fig|220664.5.peg.5485"/>
<dbReference type="eggNOG" id="COG2265">
    <property type="taxonomic scope" value="Bacteria"/>
</dbReference>
<dbReference type="HOGENOM" id="CLU_043022_0_0_6"/>
<dbReference type="Proteomes" id="UP000008540">
    <property type="component" value="Chromosome"/>
</dbReference>
<dbReference type="GO" id="GO:0005829">
    <property type="term" value="C:cytosol"/>
    <property type="evidence" value="ECO:0007669"/>
    <property type="project" value="TreeGrafter"/>
</dbReference>
<dbReference type="GO" id="GO:0019843">
    <property type="term" value="F:rRNA binding"/>
    <property type="evidence" value="ECO:0007669"/>
    <property type="project" value="TreeGrafter"/>
</dbReference>
<dbReference type="GO" id="GO:0030697">
    <property type="term" value="F:tRNA (uracil(54)-C5)-methyltransferase activity, S-adenosyl methionine-dependent"/>
    <property type="evidence" value="ECO:0007669"/>
    <property type="project" value="UniProtKB-UniRule"/>
</dbReference>
<dbReference type="GO" id="GO:0000049">
    <property type="term" value="F:tRNA binding"/>
    <property type="evidence" value="ECO:0007669"/>
    <property type="project" value="TreeGrafter"/>
</dbReference>
<dbReference type="GO" id="GO:0030488">
    <property type="term" value="P:tRNA methylation"/>
    <property type="evidence" value="ECO:0007669"/>
    <property type="project" value="UniProtKB-UniRule"/>
</dbReference>
<dbReference type="CDD" id="cd02440">
    <property type="entry name" value="AdoMet_MTases"/>
    <property type="match status" value="1"/>
</dbReference>
<dbReference type="FunFam" id="2.40.50.1070:FF:000001">
    <property type="entry name" value="tRNA/tmRNA (uracil-C(5))-methyltransferase"/>
    <property type="match status" value="1"/>
</dbReference>
<dbReference type="FunFam" id="3.40.50.150:FF:000012">
    <property type="entry name" value="tRNA/tmRNA (uracil-C(5))-methyltransferase"/>
    <property type="match status" value="1"/>
</dbReference>
<dbReference type="Gene3D" id="2.40.50.1070">
    <property type="match status" value="1"/>
</dbReference>
<dbReference type="Gene3D" id="3.40.50.150">
    <property type="entry name" value="Vaccinia Virus protein VP39"/>
    <property type="match status" value="1"/>
</dbReference>
<dbReference type="HAMAP" id="MF_01011">
    <property type="entry name" value="RNA_methyltr_TrmA"/>
    <property type="match status" value="1"/>
</dbReference>
<dbReference type="InterPro" id="IPR030390">
    <property type="entry name" value="MeTrfase_TrmA_AS"/>
</dbReference>
<dbReference type="InterPro" id="IPR030391">
    <property type="entry name" value="MeTrfase_TrmA_CS"/>
</dbReference>
<dbReference type="InterPro" id="IPR029063">
    <property type="entry name" value="SAM-dependent_MTases_sf"/>
</dbReference>
<dbReference type="InterPro" id="IPR011869">
    <property type="entry name" value="TrmA_MeTrfase"/>
</dbReference>
<dbReference type="InterPro" id="IPR010280">
    <property type="entry name" value="U5_MeTrfase_fam"/>
</dbReference>
<dbReference type="NCBIfam" id="TIGR02143">
    <property type="entry name" value="trmA_only"/>
    <property type="match status" value="1"/>
</dbReference>
<dbReference type="PANTHER" id="PTHR47790">
    <property type="entry name" value="TRNA/TMRNA (URACIL-C(5))-METHYLTRANSFERASE"/>
    <property type="match status" value="1"/>
</dbReference>
<dbReference type="PANTHER" id="PTHR47790:SF2">
    <property type="entry name" value="TRNA_TMRNA (URACIL-C(5))-METHYLTRANSFERASE"/>
    <property type="match status" value="1"/>
</dbReference>
<dbReference type="Pfam" id="PF05958">
    <property type="entry name" value="tRNA_U5-meth_tr"/>
    <property type="match status" value="1"/>
</dbReference>
<dbReference type="SUPFAM" id="SSF53335">
    <property type="entry name" value="S-adenosyl-L-methionine-dependent methyltransferases"/>
    <property type="match status" value="1"/>
</dbReference>
<dbReference type="PROSITE" id="PS51687">
    <property type="entry name" value="SAM_MT_RNA_M5U"/>
    <property type="match status" value="1"/>
</dbReference>
<dbReference type="PROSITE" id="PS01230">
    <property type="entry name" value="TRMA_1"/>
    <property type="match status" value="1"/>
</dbReference>
<dbReference type="PROSITE" id="PS01231">
    <property type="entry name" value="TRMA_2"/>
    <property type="match status" value="1"/>
</dbReference>
<comment type="function">
    <text evidence="1">Dual-specificity methyltransferase that catalyzes the formation of 5-methyluridine at position 54 (m5U54) in all tRNAs, and that of position 341 (m5U341) in tmRNA (transfer-mRNA).</text>
</comment>
<comment type="catalytic activity">
    <reaction evidence="1">
        <text>uridine(54) in tRNA + S-adenosyl-L-methionine = 5-methyluridine(54) in tRNA + S-adenosyl-L-homocysteine + H(+)</text>
        <dbReference type="Rhea" id="RHEA:42712"/>
        <dbReference type="Rhea" id="RHEA-COMP:10167"/>
        <dbReference type="Rhea" id="RHEA-COMP:10193"/>
        <dbReference type="ChEBI" id="CHEBI:15378"/>
        <dbReference type="ChEBI" id="CHEBI:57856"/>
        <dbReference type="ChEBI" id="CHEBI:59789"/>
        <dbReference type="ChEBI" id="CHEBI:65315"/>
        <dbReference type="ChEBI" id="CHEBI:74447"/>
        <dbReference type="EC" id="2.1.1.35"/>
    </reaction>
</comment>
<comment type="catalytic activity">
    <reaction evidence="1">
        <text>uridine(341) in tmRNA + S-adenosyl-L-methionine = 5-methyluridine(341) in tmRNA + S-adenosyl-L-homocysteine + H(+)</text>
        <dbReference type="Rhea" id="RHEA:43612"/>
        <dbReference type="Rhea" id="RHEA-COMP:10630"/>
        <dbReference type="Rhea" id="RHEA-COMP:10631"/>
        <dbReference type="ChEBI" id="CHEBI:15378"/>
        <dbReference type="ChEBI" id="CHEBI:57856"/>
        <dbReference type="ChEBI" id="CHEBI:59789"/>
        <dbReference type="ChEBI" id="CHEBI:65315"/>
        <dbReference type="ChEBI" id="CHEBI:74447"/>
    </reaction>
</comment>
<comment type="similarity">
    <text evidence="1">Belongs to the class I-like SAM-binding methyltransferase superfamily. RNA M5U methyltransferase family. TrmA subfamily.</text>
</comment>
<accession>Q4K5P2</accession>
<organism>
    <name type="scientific">Pseudomonas fluorescens (strain ATCC BAA-477 / NRRL B-23932 / Pf-5)</name>
    <dbReference type="NCBI Taxonomy" id="220664"/>
    <lineage>
        <taxon>Bacteria</taxon>
        <taxon>Pseudomonadati</taxon>
        <taxon>Pseudomonadota</taxon>
        <taxon>Gammaproteobacteria</taxon>
        <taxon>Pseudomonadales</taxon>
        <taxon>Pseudomonadaceae</taxon>
        <taxon>Pseudomonas</taxon>
    </lineage>
</organism>